<accession>P55938</accession>
<evidence type="ECO:0000305" key="1"/>
<comment type="subcellular location">
    <subcellularLocation>
        <location>Mitochondrion</location>
    </subcellularLocation>
</comment>
<comment type="similarity">
    <text evidence="1">Belongs to the heat shock protein 70 family.</text>
</comment>
<name>HSP71_LEITA</name>
<proteinExistence type="evidence at protein level"/>
<feature type="chain" id="PRO_0000078306" description="Heat shock 70-related protein 1, mitochondrial">
    <location>
        <begin position="1"/>
        <end position="22" status="greater than"/>
    </location>
</feature>
<feature type="non-terminal residue">
    <location>
        <position position="22"/>
    </location>
</feature>
<keyword id="KW-0067">ATP-binding</keyword>
<keyword id="KW-0903">Direct protein sequencing</keyword>
<keyword id="KW-0496">Mitochondrion</keyword>
<keyword id="KW-0547">Nucleotide-binding</keyword>
<keyword id="KW-0346">Stress response</keyword>
<organism>
    <name type="scientific">Leishmania tarentolae</name>
    <name type="common">Sauroleishmania tarentolae</name>
    <dbReference type="NCBI Taxonomy" id="5689"/>
    <lineage>
        <taxon>Eukaryota</taxon>
        <taxon>Discoba</taxon>
        <taxon>Euglenozoa</taxon>
        <taxon>Kinetoplastea</taxon>
        <taxon>Metakinetoplastina</taxon>
        <taxon>Trypanosomatida</taxon>
        <taxon>Trypanosomatidae</taxon>
        <taxon>Leishmaniinae</taxon>
        <taxon>Leishmania</taxon>
        <taxon>lizard Leishmania</taxon>
    </lineage>
</organism>
<dbReference type="GO" id="GO:0005739">
    <property type="term" value="C:mitochondrion"/>
    <property type="evidence" value="ECO:0007669"/>
    <property type="project" value="UniProtKB-SubCell"/>
</dbReference>
<dbReference type="GO" id="GO:0005524">
    <property type="term" value="F:ATP binding"/>
    <property type="evidence" value="ECO:0007669"/>
    <property type="project" value="UniProtKB-KW"/>
</dbReference>
<dbReference type="Gene3D" id="3.30.420.40">
    <property type="match status" value="1"/>
</dbReference>
<dbReference type="InterPro" id="IPR018181">
    <property type="entry name" value="Heat_shock_70_CS"/>
</dbReference>
<dbReference type="PROSITE" id="PS00297">
    <property type="entry name" value="HSP70_1"/>
    <property type="match status" value="1"/>
</dbReference>
<protein>
    <recommendedName>
        <fullName>Heat shock 70-related protein 1, mitochondrial</fullName>
    </recommendedName>
</protein>
<reference key="1">
    <citation type="journal article" date="1995" name="Mol. Biochem. Parasitol.">
        <title>Characterization of two nuclear-encoded protein components of mitochondrial ribonucleoprotein complexes from Leishmania tarentolae.</title>
        <authorList>
            <person name="Bringaud F."/>
            <person name="Peris M."/>
            <person name="Zen K.H."/>
            <person name="Simpson L."/>
        </authorList>
    </citation>
    <scope>PROTEIN SEQUENCE</scope>
    <source>
        <strain>UC</strain>
    </source>
</reference>
<sequence>ESQKVQGDVIGVDLGTTYSCVA</sequence>